<protein>
    <recommendedName>
        <fullName evidence="1">Phosphoserine aminotransferase</fullName>
        <ecNumber evidence="1">2.6.1.52</ecNumber>
    </recommendedName>
    <alternativeName>
        <fullName evidence="1">Phosphohydroxythreonine aminotransferase</fullName>
        <shortName evidence="1">PSAT</shortName>
    </alternativeName>
</protein>
<reference key="1">
    <citation type="journal article" date="2008" name="Foodborne Pathog. Dis.">
        <title>The complete genome sequence and analysis of the human pathogen Campylobacter lari.</title>
        <authorList>
            <person name="Miller W.G."/>
            <person name="Wang G."/>
            <person name="Binnewies T.T."/>
            <person name="Parker C.T."/>
        </authorList>
    </citation>
    <scope>NUCLEOTIDE SEQUENCE [LARGE SCALE GENOMIC DNA]</scope>
    <source>
        <strain>RM2100 / D67 / ATCC BAA-1060</strain>
    </source>
</reference>
<feature type="chain" id="PRO_1000123468" description="Phosphoserine aminotransferase">
    <location>
        <begin position="1"/>
        <end position="358"/>
    </location>
</feature>
<feature type="binding site" evidence="1">
    <location>
        <position position="41"/>
    </location>
    <ligand>
        <name>L-glutamate</name>
        <dbReference type="ChEBI" id="CHEBI:29985"/>
    </ligand>
</feature>
<feature type="binding site" evidence="1">
    <location>
        <begin position="75"/>
        <end position="76"/>
    </location>
    <ligand>
        <name>pyridoxal 5'-phosphate</name>
        <dbReference type="ChEBI" id="CHEBI:597326"/>
    </ligand>
</feature>
<feature type="binding site" evidence="1">
    <location>
        <position position="100"/>
    </location>
    <ligand>
        <name>pyridoxal 5'-phosphate</name>
        <dbReference type="ChEBI" id="CHEBI:597326"/>
    </ligand>
</feature>
<feature type="binding site" evidence="1">
    <location>
        <position position="148"/>
    </location>
    <ligand>
        <name>pyridoxal 5'-phosphate</name>
        <dbReference type="ChEBI" id="CHEBI:597326"/>
    </ligand>
</feature>
<feature type="binding site" evidence="1">
    <location>
        <position position="167"/>
    </location>
    <ligand>
        <name>pyridoxal 5'-phosphate</name>
        <dbReference type="ChEBI" id="CHEBI:597326"/>
    </ligand>
</feature>
<feature type="binding site" evidence="1">
    <location>
        <position position="190"/>
    </location>
    <ligand>
        <name>pyridoxal 5'-phosphate</name>
        <dbReference type="ChEBI" id="CHEBI:597326"/>
    </ligand>
</feature>
<feature type="binding site" evidence="1">
    <location>
        <begin position="233"/>
        <end position="234"/>
    </location>
    <ligand>
        <name>pyridoxal 5'-phosphate</name>
        <dbReference type="ChEBI" id="CHEBI:597326"/>
    </ligand>
</feature>
<feature type="modified residue" description="N6-(pyridoxal phosphate)lysine" evidence="1">
    <location>
        <position position="191"/>
    </location>
</feature>
<dbReference type="EC" id="2.6.1.52" evidence="1"/>
<dbReference type="EMBL" id="CP000932">
    <property type="protein sequence ID" value="ACM64665.1"/>
    <property type="molecule type" value="Genomic_DNA"/>
</dbReference>
<dbReference type="RefSeq" id="WP_012662048.1">
    <property type="nucleotide sequence ID" value="NC_012039.1"/>
</dbReference>
<dbReference type="SMR" id="B9KDM7"/>
<dbReference type="STRING" id="306263.Cla_1350"/>
<dbReference type="KEGG" id="cla:CLA_1350"/>
<dbReference type="PATRIC" id="fig|306263.5.peg.1336"/>
<dbReference type="eggNOG" id="COG1932">
    <property type="taxonomic scope" value="Bacteria"/>
</dbReference>
<dbReference type="HOGENOM" id="CLU_034866_0_2_7"/>
<dbReference type="UniPathway" id="UPA00135">
    <property type="reaction ID" value="UER00197"/>
</dbReference>
<dbReference type="UniPathway" id="UPA00244">
    <property type="reaction ID" value="UER00311"/>
</dbReference>
<dbReference type="Proteomes" id="UP000007727">
    <property type="component" value="Chromosome"/>
</dbReference>
<dbReference type="GO" id="GO:0005737">
    <property type="term" value="C:cytoplasm"/>
    <property type="evidence" value="ECO:0007669"/>
    <property type="project" value="UniProtKB-SubCell"/>
</dbReference>
<dbReference type="GO" id="GO:0004648">
    <property type="term" value="F:O-phospho-L-serine:2-oxoglutarate aminotransferase activity"/>
    <property type="evidence" value="ECO:0007669"/>
    <property type="project" value="UniProtKB-UniRule"/>
</dbReference>
<dbReference type="GO" id="GO:0030170">
    <property type="term" value="F:pyridoxal phosphate binding"/>
    <property type="evidence" value="ECO:0007669"/>
    <property type="project" value="UniProtKB-UniRule"/>
</dbReference>
<dbReference type="GO" id="GO:0006564">
    <property type="term" value="P:L-serine biosynthetic process"/>
    <property type="evidence" value="ECO:0007669"/>
    <property type="project" value="UniProtKB-UniRule"/>
</dbReference>
<dbReference type="GO" id="GO:0008615">
    <property type="term" value="P:pyridoxine biosynthetic process"/>
    <property type="evidence" value="ECO:0007669"/>
    <property type="project" value="UniProtKB-UniRule"/>
</dbReference>
<dbReference type="FunFam" id="3.40.640.10:FF:000010">
    <property type="entry name" value="Phosphoserine aminotransferase"/>
    <property type="match status" value="1"/>
</dbReference>
<dbReference type="FunFam" id="3.90.1150.10:FF:000006">
    <property type="entry name" value="Phosphoserine aminotransferase"/>
    <property type="match status" value="1"/>
</dbReference>
<dbReference type="Gene3D" id="3.90.1150.10">
    <property type="entry name" value="Aspartate Aminotransferase, domain 1"/>
    <property type="match status" value="1"/>
</dbReference>
<dbReference type="Gene3D" id="3.40.640.10">
    <property type="entry name" value="Type I PLP-dependent aspartate aminotransferase-like (Major domain)"/>
    <property type="match status" value="1"/>
</dbReference>
<dbReference type="HAMAP" id="MF_00160">
    <property type="entry name" value="SerC_aminotrans_5"/>
    <property type="match status" value="1"/>
</dbReference>
<dbReference type="InterPro" id="IPR000192">
    <property type="entry name" value="Aminotrans_V_dom"/>
</dbReference>
<dbReference type="InterPro" id="IPR022278">
    <property type="entry name" value="Pser_aminoTfrase"/>
</dbReference>
<dbReference type="InterPro" id="IPR015424">
    <property type="entry name" value="PyrdxlP-dep_Trfase"/>
</dbReference>
<dbReference type="InterPro" id="IPR015421">
    <property type="entry name" value="PyrdxlP-dep_Trfase_major"/>
</dbReference>
<dbReference type="InterPro" id="IPR015422">
    <property type="entry name" value="PyrdxlP-dep_Trfase_small"/>
</dbReference>
<dbReference type="NCBIfam" id="NF003764">
    <property type="entry name" value="PRK05355.1"/>
    <property type="match status" value="1"/>
</dbReference>
<dbReference type="NCBIfam" id="TIGR01364">
    <property type="entry name" value="serC_1"/>
    <property type="match status" value="1"/>
</dbReference>
<dbReference type="PANTHER" id="PTHR43247">
    <property type="entry name" value="PHOSPHOSERINE AMINOTRANSFERASE"/>
    <property type="match status" value="1"/>
</dbReference>
<dbReference type="PANTHER" id="PTHR43247:SF1">
    <property type="entry name" value="PHOSPHOSERINE AMINOTRANSFERASE"/>
    <property type="match status" value="1"/>
</dbReference>
<dbReference type="Pfam" id="PF00266">
    <property type="entry name" value="Aminotran_5"/>
    <property type="match status" value="1"/>
</dbReference>
<dbReference type="PIRSF" id="PIRSF000525">
    <property type="entry name" value="SerC"/>
    <property type="match status" value="1"/>
</dbReference>
<dbReference type="SUPFAM" id="SSF53383">
    <property type="entry name" value="PLP-dependent transferases"/>
    <property type="match status" value="1"/>
</dbReference>
<proteinExistence type="inferred from homology"/>
<gene>
    <name evidence="1" type="primary">serC</name>
    <name type="ordered locus">Cla_1350</name>
</gene>
<comment type="function">
    <text evidence="1">Catalyzes the reversible conversion of 3-phosphohydroxypyruvate to phosphoserine and of 3-hydroxy-2-oxo-4-phosphonooxybutanoate to phosphohydroxythreonine.</text>
</comment>
<comment type="catalytic activity">
    <reaction evidence="1">
        <text>O-phospho-L-serine + 2-oxoglutarate = 3-phosphooxypyruvate + L-glutamate</text>
        <dbReference type="Rhea" id="RHEA:14329"/>
        <dbReference type="ChEBI" id="CHEBI:16810"/>
        <dbReference type="ChEBI" id="CHEBI:18110"/>
        <dbReference type="ChEBI" id="CHEBI:29985"/>
        <dbReference type="ChEBI" id="CHEBI:57524"/>
        <dbReference type="EC" id="2.6.1.52"/>
    </reaction>
</comment>
<comment type="catalytic activity">
    <reaction evidence="1">
        <text>4-(phosphooxy)-L-threonine + 2-oxoglutarate = (R)-3-hydroxy-2-oxo-4-phosphooxybutanoate + L-glutamate</text>
        <dbReference type="Rhea" id="RHEA:16573"/>
        <dbReference type="ChEBI" id="CHEBI:16810"/>
        <dbReference type="ChEBI" id="CHEBI:29985"/>
        <dbReference type="ChEBI" id="CHEBI:58452"/>
        <dbReference type="ChEBI" id="CHEBI:58538"/>
        <dbReference type="EC" id="2.6.1.52"/>
    </reaction>
</comment>
<comment type="cofactor">
    <cofactor evidence="1">
        <name>pyridoxal 5'-phosphate</name>
        <dbReference type="ChEBI" id="CHEBI:597326"/>
    </cofactor>
    <text evidence="1">Binds 1 pyridoxal phosphate per subunit.</text>
</comment>
<comment type="pathway">
    <text evidence="1">Amino-acid biosynthesis; L-serine biosynthesis; L-serine from 3-phospho-D-glycerate: step 2/3.</text>
</comment>
<comment type="pathway">
    <text evidence="1">Cofactor biosynthesis; pyridoxine 5'-phosphate biosynthesis; pyridoxine 5'-phosphate from D-erythrose 4-phosphate: step 3/5.</text>
</comment>
<comment type="subunit">
    <text evidence="1">Homodimer.</text>
</comment>
<comment type="subcellular location">
    <subcellularLocation>
        <location evidence="1">Cytoplasm</location>
    </subcellularLocation>
</comment>
<comment type="similarity">
    <text evidence="1">Belongs to the class-V pyridoxal-phosphate-dependent aminotransferase family. SerC subfamily.</text>
</comment>
<sequence length="358" mass="40387">MRVMNFSAGPSNLPDEVLKEAQEHLYDYHGKGFSIMEVSHRGKVFEEVHFEAIKMAKELYGVNDDYEVLLMQGGASLQFAMIPMNLYMGGVCEFANTGVWTKKAIKEAEILGVNTKIVASSQESEFDHIPQFEFSDNADYAYICSNNTIYGTQYKCYPKTKSPLIIDASSDFFSKKIDFSNIAMLFGGVQKNAGISGLACAFVRKDMIERSKNKNIPSMLKYSIYAENDSLFNTPATFAIYMFNLEMKWLLNQGGLDKINEQNIQKAKILYDVIDESNGFYKGHAKKENRSLMNVSFNIAHDKNLEPVFVKEAEENGMIGLKGHKILGGIRASIYNSISIEKVQKLSEFMKNFAKKHA</sequence>
<accession>B9KDM7</accession>
<organism>
    <name type="scientific">Campylobacter lari (strain RM2100 / D67 / ATCC BAA-1060)</name>
    <dbReference type="NCBI Taxonomy" id="306263"/>
    <lineage>
        <taxon>Bacteria</taxon>
        <taxon>Pseudomonadati</taxon>
        <taxon>Campylobacterota</taxon>
        <taxon>Epsilonproteobacteria</taxon>
        <taxon>Campylobacterales</taxon>
        <taxon>Campylobacteraceae</taxon>
        <taxon>Campylobacter</taxon>
    </lineage>
</organism>
<keyword id="KW-0028">Amino-acid biosynthesis</keyword>
<keyword id="KW-0032">Aminotransferase</keyword>
<keyword id="KW-0963">Cytoplasm</keyword>
<keyword id="KW-0663">Pyridoxal phosphate</keyword>
<keyword id="KW-0664">Pyridoxine biosynthesis</keyword>
<keyword id="KW-1185">Reference proteome</keyword>
<keyword id="KW-0718">Serine biosynthesis</keyword>
<keyword id="KW-0808">Transferase</keyword>
<evidence type="ECO:0000255" key="1">
    <source>
        <dbReference type="HAMAP-Rule" id="MF_00160"/>
    </source>
</evidence>
<name>SERC_CAMLR</name>